<keyword id="KW-0963">Cytoplasm</keyword>
<keyword id="KW-0255">Endonuclease</keyword>
<keyword id="KW-0378">Hydrolase</keyword>
<keyword id="KW-0460">Magnesium</keyword>
<keyword id="KW-0479">Metal-binding</keyword>
<keyword id="KW-0507">mRNA processing</keyword>
<keyword id="KW-0540">Nuclease</keyword>
<keyword id="KW-1185">Reference proteome</keyword>
<keyword id="KW-0694">RNA-binding</keyword>
<keyword id="KW-0698">rRNA processing</keyword>
<keyword id="KW-0819">tRNA processing</keyword>
<proteinExistence type="inferred from homology"/>
<protein>
    <recommendedName>
        <fullName>Ribonuclease 3</fullName>
        <ecNumber>3.1.26.3</ecNumber>
    </recommendedName>
    <alternativeName>
        <fullName>Ribonuclease III</fullName>
        <shortName>RNase III</shortName>
    </alternativeName>
</protein>
<comment type="function">
    <text evidence="1">Digests double-stranded RNA. Involved in the processing of primary rRNA transcript to yield the immediate precursors to the large and small rRNAs (23S and 16S). Processes some mRNAs, and tRNAs when they are encoded in the rRNA operon. Processes pre-crRNA and tracrRNA of type II CRISPR loci if present in the organism (By similarity).</text>
</comment>
<comment type="catalytic activity">
    <reaction>
        <text>Endonucleolytic cleavage to 5'-phosphomonoester.</text>
        <dbReference type="EC" id="3.1.26.3"/>
    </reaction>
</comment>
<comment type="cofactor">
    <cofactor evidence="1">
        <name>Mg(2+)</name>
        <dbReference type="ChEBI" id="CHEBI:18420"/>
    </cofactor>
</comment>
<comment type="subunit">
    <text evidence="1">Homodimer.</text>
</comment>
<comment type="subcellular location">
    <subcellularLocation>
        <location evidence="1">Cytoplasm</location>
    </subcellularLocation>
</comment>
<comment type="similarity">
    <text evidence="3">Belongs to the ribonuclease III family.</text>
</comment>
<reference key="1">
    <citation type="journal article" date="2002" name="J. Bacteriol.">
        <title>Whole-genome comparison of Mycobacterium tuberculosis clinical and laboratory strains.</title>
        <authorList>
            <person name="Fleischmann R.D."/>
            <person name="Alland D."/>
            <person name="Eisen J.A."/>
            <person name="Carpenter L."/>
            <person name="White O."/>
            <person name="Peterson J.D."/>
            <person name="DeBoy R.T."/>
            <person name="Dodson R.J."/>
            <person name="Gwinn M.L."/>
            <person name="Haft D.H."/>
            <person name="Hickey E.K."/>
            <person name="Kolonay J.F."/>
            <person name="Nelson W.C."/>
            <person name="Umayam L.A."/>
            <person name="Ermolaeva M.D."/>
            <person name="Salzberg S.L."/>
            <person name="Delcher A."/>
            <person name="Utterback T.R."/>
            <person name="Weidman J.F."/>
            <person name="Khouri H.M."/>
            <person name="Gill J."/>
            <person name="Mikula A."/>
            <person name="Bishai W."/>
            <person name="Jacobs W.R. Jr."/>
            <person name="Venter J.C."/>
            <person name="Fraser C.M."/>
        </authorList>
    </citation>
    <scope>NUCLEOTIDE SEQUENCE [LARGE SCALE GENOMIC DNA]</scope>
    <source>
        <strain>CDC 1551 / Oshkosh</strain>
    </source>
</reference>
<dbReference type="EC" id="3.1.26.3"/>
<dbReference type="EMBL" id="AE000516">
    <property type="protein sequence ID" value="AAK47322.1"/>
    <property type="molecule type" value="Genomic_DNA"/>
</dbReference>
<dbReference type="PIR" id="E70748">
    <property type="entry name" value="E70748"/>
</dbReference>
<dbReference type="RefSeq" id="WP_003414820.1">
    <property type="nucleotide sequence ID" value="NZ_KK341227.1"/>
</dbReference>
<dbReference type="SMR" id="P9WH02"/>
<dbReference type="GeneID" id="45426913"/>
<dbReference type="KEGG" id="mtc:MT2995"/>
<dbReference type="PATRIC" id="fig|83331.31.peg.3235"/>
<dbReference type="HOGENOM" id="CLU_000907_1_2_11"/>
<dbReference type="Proteomes" id="UP000001020">
    <property type="component" value="Chromosome"/>
</dbReference>
<dbReference type="GO" id="GO:0005737">
    <property type="term" value="C:cytoplasm"/>
    <property type="evidence" value="ECO:0007669"/>
    <property type="project" value="UniProtKB-SubCell"/>
</dbReference>
<dbReference type="GO" id="GO:0003725">
    <property type="term" value="F:double-stranded RNA binding"/>
    <property type="evidence" value="ECO:0007669"/>
    <property type="project" value="TreeGrafter"/>
</dbReference>
<dbReference type="GO" id="GO:0046872">
    <property type="term" value="F:metal ion binding"/>
    <property type="evidence" value="ECO:0007669"/>
    <property type="project" value="UniProtKB-KW"/>
</dbReference>
<dbReference type="GO" id="GO:0004525">
    <property type="term" value="F:ribonuclease III activity"/>
    <property type="evidence" value="ECO:0007669"/>
    <property type="project" value="UniProtKB-UniRule"/>
</dbReference>
<dbReference type="GO" id="GO:0006397">
    <property type="term" value="P:mRNA processing"/>
    <property type="evidence" value="ECO:0007669"/>
    <property type="project" value="UniProtKB-UniRule"/>
</dbReference>
<dbReference type="GO" id="GO:0010468">
    <property type="term" value="P:regulation of gene expression"/>
    <property type="evidence" value="ECO:0007669"/>
    <property type="project" value="TreeGrafter"/>
</dbReference>
<dbReference type="GO" id="GO:0006364">
    <property type="term" value="P:rRNA processing"/>
    <property type="evidence" value="ECO:0007669"/>
    <property type="project" value="UniProtKB-UniRule"/>
</dbReference>
<dbReference type="GO" id="GO:0008033">
    <property type="term" value="P:tRNA processing"/>
    <property type="evidence" value="ECO:0007669"/>
    <property type="project" value="UniProtKB-KW"/>
</dbReference>
<dbReference type="CDD" id="cd10845">
    <property type="entry name" value="DSRM_RNAse_III_family"/>
    <property type="match status" value="1"/>
</dbReference>
<dbReference type="CDD" id="cd00593">
    <property type="entry name" value="RIBOc"/>
    <property type="match status" value="1"/>
</dbReference>
<dbReference type="FunFam" id="1.10.1520.10:FF:000001">
    <property type="entry name" value="Ribonuclease 3"/>
    <property type="match status" value="1"/>
</dbReference>
<dbReference type="FunFam" id="3.30.160.20:FF:000003">
    <property type="entry name" value="Ribonuclease 3"/>
    <property type="match status" value="1"/>
</dbReference>
<dbReference type="Gene3D" id="3.30.160.20">
    <property type="match status" value="1"/>
</dbReference>
<dbReference type="Gene3D" id="1.10.1520.10">
    <property type="entry name" value="Ribonuclease III domain"/>
    <property type="match status" value="1"/>
</dbReference>
<dbReference type="HAMAP" id="MF_00104">
    <property type="entry name" value="RNase_III"/>
    <property type="match status" value="1"/>
</dbReference>
<dbReference type="InterPro" id="IPR014720">
    <property type="entry name" value="dsRBD_dom"/>
</dbReference>
<dbReference type="InterPro" id="IPR011907">
    <property type="entry name" value="RNase_III"/>
</dbReference>
<dbReference type="InterPro" id="IPR000999">
    <property type="entry name" value="RNase_III_dom"/>
</dbReference>
<dbReference type="InterPro" id="IPR036389">
    <property type="entry name" value="RNase_III_sf"/>
</dbReference>
<dbReference type="NCBIfam" id="TIGR02191">
    <property type="entry name" value="RNaseIII"/>
    <property type="match status" value="1"/>
</dbReference>
<dbReference type="PANTHER" id="PTHR11207:SF0">
    <property type="entry name" value="RIBONUCLEASE 3"/>
    <property type="match status" value="1"/>
</dbReference>
<dbReference type="PANTHER" id="PTHR11207">
    <property type="entry name" value="RIBONUCLEASE III"/>
    <property type="match status" value="1"/>
</dbReference>
<dbReference type="Pfam" id="PF00035">
    <property type="entry name" value="dsrm"/>
    <property type="match status" value="1"/>
</dbReference>
<dbReference type="Pfam" id="PF14622">
    <property type="entry name" value="Ribonucleas_3_3"/>
    <property type="match status" value="1"/>
</dbReference>
<dbReference type="SMART" id="SM00358">
    <property type="entry name" value="DSRM"/>
    <property type="match status" value="1"/>
</dbReference>
<dbReference type="SMART" id="SM00535">
    <property type="entry name" value="RIBOc"/>
    <property type="match status" value="1"/>
</dbReference>
<dbReference type="SUPFAM" id="SSF54768">
    <property type="entry name" value="dsRNA-binding domain-like"/>
    <property type="match status" value="1"/>
</dbReference>
<dbReference type="SUPFAM" id="SSF69065">
    <property type="entry name" value="RNase III domain-like"/>
    <property type="match status" value="1"/>
</dbReference>
<dbReference type="PROSITE" id="PS50137">
    <property type="entry name" value="DS_RBD"/>
    <property type="match status" value="1"/>
</dbReference>
<dbReference type="PROSITE" id="PS00517">
    <property type="entry name" value="RNASE_3_1"/>
    <property type="match status" value="1"/>
</dbReference>
<dbReference type="PROSITE" id="PS50142">
    <property type="entry name" value="RNASE_3_2"/>
    <property type="match status" value="1"/>
</dbReference>
<name>RNC_MYCTO</name>
<accession>P9WH02</accession>
<accession>L0TDT0</accession>
<accession>P66666</accession>
<accession>Q10962</accession>
<evidence type="ECO:0000250" key="1"/>
<evidence type="ECO:0000255" key="2"/>
<evidence type="ECO:0000305" key="3"/>
<feature type="chain" id="PRO_0000428272" description="Ribonuclease 3">
    <location>
        <begin position="1"/>
        <end position="240"/>
    </location>
</feature>
<feature type="domain" description="RNase III">
    <location>
        <begin position="19"/>
        <end position="134"/>
    </location>
</feature>
<feature type="domain" description="DRBM">
    <location>
        <begin position="161"/>
        <end position="229"/>
    </location>
</feature>
<feature type="active site" evidence="2">
    <location>
        <position position="48"/>
    </location>
</feature>
<feature type="active site" evidence="1">
    <location>
        <position position="123"/>
    </location>
</feature>
<feature type="binding site" evidence="1">
    <location>
        <position position="44"/>
    </location>
    <ligand>
        <name>Mg(2+)</name>
        <dbReference type="ChEBI" id="CHEBI:18420"/>
    </ligand>
</feature>
<feature type="binding site" evidence="1">
    <location>
        <position position="120"/>
    </location>
    <ligand>
        <name>Mg(2+)</name>
        <dbReference type="ChEBI" id="CHEBI:18420"/>
    </ligand>
</feature>
<feature type="binding site" evidence="1">
    <location>
        <position position="123"/>
    </location>
    <ligand>
        <name>Mg(2+)</name>
        <dbReference type="ChEBI" id="CHEBI:18420"/>
    </ligand>
</feature>
<sequence>MIRSRQPLLDALGVDLPDELLSLALTHRSYAYENGGLPTNERLEFLGDAVLGLTITDALFHRHPDRSEGDLAKLRASVVNTQALADVARRLCAEGLGVHVLLGRGEANTGGADKSSILADGMESLLGAIYLQHGMEKAREVILRLFGPLLDAAPTLGAGLDWKTSLQELTAARGLGAPSYLVTSTGPDHDKEFTAVVVVMDSEYGSGVGRSKKEAEQKAAAAAWKALEVLDNAMPGKTSA</sequence>
<gene>
    <name type="primary">rnc</name>
    <name type="ordered locus">MT2995</name>
</gene>
<organism>
    <name type="scientific">Mycobacterium tuberculosis (strain CDC 1551 / Oshkosh)</name>
    <dbReference type="NCBI Taxonomy" id="83331"/>
    <lineage>
        <taxon>Bacteria</taxon>
        <taxon>Bacillati</taxon>
        <taxon>Actinomycetota</taxon>
        <taxon>Actinomycetes</taxon>
        <taxon>Mycobacteriales</taxon>
        <taxon>Mycobacteriaceae</taxon>
        <taxon>Mycobacterium</taxon>
        <taxon>Mycobacterium tuberculosis complex</taxon>
    </lineage>
</organism>